<dbReference type="EMBL" id="M12453">
    <property type="protein sequence ID" value="AAA49689.1"/>
    <property type="molecule type" value="mRNA"/>
</dbReference>
<dbReference type="Proteomes" id="UP000186698">
    <property type="component" value="Unplaced"/>
</dbReference>
<dbReference type="GO" id="GO:0030424">
    <property type="term" value="C:axon"/>
    <property type="evidence" value="ECO:0007669"/>
    <property type="project" value="TreeGrafter"/>
</dbReference>
<dbReference type="GO" id="GO:0005615">
    <property type="term" value="C:extracellular space"/>
    <property type="evidence" value="ECO:0007669"/>
    <property type="project" value="TreeGrafter"/>
</dbReference>
<dbReference type="GO" id="GO:0005184">
    <property type="term" value="F:neuropeptide hormone activity"/>
    <property type="evidence" value="ECO:0007669"/>
    <property type="project" value="InterPro"/>
</dbReference>
<dbReference type="GO" id="GO:0006952">
    <property type="term" value="P:defense response"/>
    <property type="evidence" value="ECO:0007669"/>
    <property type="project" value="UniProtKB-KW"/>
</dbReference>
<dbReference type="GO" id="GO:0007586">
    <property type="term" value="P:digestion"/>
    <property type="evidence" value="ECO:0007669"/>
    <property type="project" value="InterPro"/>
</dbReference>
<dbReference type="InterPro" id="IPR015499">
    <property type="entry name" value="CCK-like"/>
</dbReference>
<dbReference type="InterPro" id="IPR001651">
    <property type="entry name" value="Gastrin/CCK"/>
</dbReference>
<dbReference type="InterPro" id="IPR013152">
    <property type="entry name" value="Gastrin/cholecystokinin_CS"/>
</dbReference>
<dbReference type="PANTHER" id="PTHR10786">
    <property type="entry name" value="CHOLECYSTOKININ"/>
    <property type="match status" value="1"/>
</dbReference>
<dbReference type="PANTHER" id="PTHR10786:SF0">
    <property type="entry name" value="CHOLECYSTOKININ"/>
    <property type="match status" value="1"/>
</dbReference>
<dbReference type="Pfam" id="PF00918">
    <property type="entry name" value="Gastrin"/>
    <property type="match status" value="2"/>
</dbReference>
<dbReference type="SMART" id="SM00029">
    <property type="entry name" value="GASTRIN"/>
    <property type="match status" value="4"/>
</dbReference>
<dbReference type="PROSITE" id="PS00259">
    <property type="entry name" value="GASTRIN"/>
    <property type="match status" value="4"/>
</dbReference>
<accession>P05225</accession>
<protein>
    <recommendedName>
        <fullName>Preprocaerulein clone PXC202</fullName>
    </recommendedName>
    <component>
        <recommendedName>
            <fullName>Caerulein</fullName>
        </recommendedName>
    </component>
</protein>
<name>CAER5_XENLA</name>
<comment type="function">
    <text>The pharmacological activities of caerulein are quite similar to the physiological activities of gastrin and related peptides.</text>
</comment>
<comment type="subcellular location">
    <subcellularLocation>
        <location>Secreted</location>
    </subcellularLocation>
</comment>
<comment type="tissue specificity">
    <text>Expressed by the skin glands.</text>
</comment>
<comment type="similarity">
    <text evidence="4">Belongs to the gastrin/cholecystokinin family.</text>
</comment>
<organism>
    <name type="scientific">Xenopus laevis</name>
    <name type="common">African clawed frog</name>
    <dbReference type="NCBI Taxonomy" id="8355"/>
    <lineage>
        <taxon>Eukaryota</taxon>
        <taxon>Metazoa</taxon>
        <taxon>Chordata</taxon>
        <taxon>Craniata</taxon>
        <taxon>Vertebrata</taxon>
        <taxon>Euteleostomi</taxon>
        <taxon>Amphibia</taxon>
        <taxon>Batrachia</taxon>
        <taxon>Anura</taxon>
        <taxon>Pipoidea</taxon>
        <taxon>Pipidae</taxon>
        <taxon>Xenopodinae</taxon>
        <taxon>Xenopus</taxon>
        <taxon>Xenopus</taxon>
    </lineage>
</organism>
<proteinExistence type="evidence at protein level"/>
<feature type="propeptide" id="PRO_0000010522" evidence="3">
    <location>
        <begin position="1" status="less than"/>
        <end position="9"/>
    </location>
</feature>
<feature type="peptide" id="PRO_0000010523" description="Caerulein" evidence="3">
    <location>
        <begin position="10"/>
        <end position="19"/>
    </location>
</feature>
<feature type="propeptide" id="PRO_0000010524" evidence="3">
    <location>
        <begin position="23"/>
        <end position="73"/>
    </location>
</feature>
<feature type="peptide" id="PRO_0000010525" description="Caerulein" evidence="3">
    <location>
        <begin position="74"/>
        <end position="83"/>
    </location>
</feature>
<feature type="propeptide" id="PRO_0000010526" evidence="3">
    <location>
        <begin position="87"/>
        <end position="137"/>
    </location>
</feature>
<feature type="peptide" id="PRO_0000010527" description="Caerulein" evidence="3">
    <location>
        <begin position="138"/>
        <end position="147"/>
    </location>
</feature>
<feature type="propeptide" id="PRO_0000010528" evidence="3">
    <location>
        <begin position="151"/>
        <end position="152"/>
    </location>
</feature>
<feature type="peptide" id="PRO_0000010529" description="Caerulein" evidence="3">
    <location>
        <begin position="153"/>
        <end position="162"/>
    </location>
</feature>
<feature type="propeptide" id="PRO_0000010530" evidence="3">
    <location>
        <begin position="166"/>
        <end position="187"/>
    </location>
</feature>
<feature type="region of interest" description="Disordered" evidence="2">
    <location>
        <begin position="1"/>
        <end position="21"/>
    </location>
</feature>
<feature type="modified residue" description="Sulfotyrosine" evidence="1">
    <location>
        <position position="13"/>
    </location>
</feature>
<feature type="modified residue" description="Phenylalanine amide" evidence="1">
    <location>
        <position position="19"/>
    </location>
</feature>
<feature type="modified residue" description="Sulfotyrosine" evidence="1">
    <location>
        <position position="77"/>
    </location>
</feature>
<feature type="modified residue" description="Phenylalanine amide" evidence="1">
    <location>
        <position position="83"/>
    </location>
</feature>
<feature type="modified residue" description="Sulfotyrosine" evidence="1">
    <location>
        <position position="141"/>
    </location>
</feature>
<feature type="modified residue" description="Phenylalanine amide" evidence="1">
    <location>
        <position position="147"/>
    </location>
</feature>
<feature type="modified residue" description="Sulfotyrosine" evidence="1">
    <location>
        <position position="156"/>
    </location>
</feature>
<feature type="modified residue" description="Phenylalanine amide" evidence="1">
    <location>
        <position position="162"/>
    </location>
</feature>
<feature type="non-terminal residue">
    <location>
        <position position="1"/>
    </location>
</feature>
<feature type="non-terminal residue">
    <location>
        <position position="187"/>
    </location>
</feature>
<sequence>NDERRFADGQQDYTGWMDFGRRDDEDDVNERDVRGFGSFLGKALKAALKIGANALGGSPQQREANDERRFADGQQDYTGWMDFGRRDDEDDVNERDVRGFGSFLGKALKAALKIGANALGGSLQQREVNDERRFADGQQDYTGWMDFGRRDGQQDYTGWMDFGRRDDEDDVHERDVRGFGSFLGKAL</sequence>
<evidence type="ECO:0000250" key="1"/>
<evidence type="ECO:0000256" key="2">
    <source>
        <dbReference type="SAM" id="MobiDB-lite"/>
    </source>
</evidence>
<evidence type="ECO:0000269" key="3">
    <source>
    </source>
</evidence>
<evidence type="ECO:0000305" key="4"/>
<keyword id="KW-0027">Amidation</keyword>
<keyword id="KW-0878">Amphibian defense peptide</keyword>
<keyword id="KW-0165">Cleavage on pair of basic residues</keyword>
<keyword id="KW-0903">Direct protein sequencing</keyword>
<keyword id="KW-1185">Reference proteome</keyword>
<keyword id="KW-0677">Repeat</keyword>
<keyword id="KW-0964">Secreted</keyword>
<keyword id="KW-0765">Sulfation</keyword>
<reference key="1">
    <citation type="journal article" date="1984" name="Gene">
        <title>An unusual repetitive structure of caerulein mRNA from the skin of Xenopus laevis.</title>
        <authorList>
            <person name="Wakabayashi T."/>
            <person name="Kato H."/>
            <person name="Tachibana S."/>
        </authorList>
    </citation>
    <scope>NUCLEOTIDE SEQUENCE [MRNA]</scope>
    <source>
        <tissue>Skin</tissue>
    </source>
</reference>
<reference key="2">
    <citation type="journal article" date="1970" name="Br. J. Pharmacol.">
        <title>Presence of caerulein in extracts of the skin of Leptodactylus pentadactylus labyrinthicus and of Xenopus laevis.</title>
        <authorList>
            <person name="Anastasi A."/>
            <person name="Bertaccini G."/>
            <person name="Cei J.M."/>
            <person name="de Daro G."/>
            <person name="Erspamer V."/>
            <person name="Impicciatore M."/>
            <person name="Roseghini M."/>
        </authorList>
    </citation>
    <scope>PROTEIN SEQUENCE OF CAERULEIN</scope>
    <source>
        <tissue>Skin secretion</tissue>
    </source>
</reference>